<organism>
    <name type="scientific">Mycobacterium tuberculosis (strain ATCC 25618 / H37Rv)</name>
    <dbReference type="NCBI Taxonomy" id="83332"/>
    <lineage>
        <taxon>Bacteria</taxon>
        <taxon>Bacillati</taxon>
        <taxon>Actinomycetota</taxon>
        <taxon>Actinomycetes</taxon>
        <taxon>Mycobacteriales</taxon>
        <taxon>Mycobacteriaceae</taxon>
        <taxon>Mycobacterium</taxon>
        <taxon>Mycobacterium tuberculosis complex</taxon>
    </lineage>
</organism>
<reference key="1">
    <citation type="journal article" date="1998" name="Nature">
        <title>Deciphering the biology of Mycobacterium tuberculosis from the complete genome sequence.</title>
        <authorList>
            <person name="Cole S.T."/>
            <person name="Brosch R."/>
            <person name="Parkhill J."/>
            <person name="Garnier T."/>
            <person name="Churcher C.M."/>
            <person name="Harris D.E."/>
            <person name="Gordon S.V."/>
            <person name="Eiglmeier K."/>
            <person name="Gas S."/>
            <person name="Barry C.E. III"/>
            <person name="Tekaia F."/>
            <person name="Badcock K."/>
            <person name="Basham D."/>
            <person name="Brown D."/>
            <person name="Chillingworth T."/>
            <person name="Connor R."/>
            <person name="Davies R.M."/>
            <person name="Devlin K."/>
            <person name="Feltwell T."/>
            <person name="Gentles S."/>
            <person name="Hamlin N."/>
            <person name="Holroyd S."/>
            <person name="Hornsby T."/>
            <person name="Jagels K."/>
            <person name="Krogh A."/>
            <person name="McLean J."/>
            <person name="Moule S."/>
            <person name="Murphy L.D."/>
            <person name="Oliver S."/>
            <person name="Osborne J."/>
            <person name="Quail M.A."/>
            <person name="Rajandream M.A."/>
            <person name="Rogers J."/>
            <person name="Rutter S."/>
            <person name="Seeger K."/>
            <person name="Skelton S."/>
            <person name="Squares S."/>
            <person name="Squares R."/>
            <person name="Sulston J.E."/>
            <person name="Taylor K."/>
            <person name="Whitehead S."/>
            <person name="Barrell B.G."/>
        </authorList>
    </citation>
    <scope>NUCLEOTIDE SEQUENCE [LARGE SCALE GENOMIC DNA]</scope>
    <source>
        <strain>ATCC 25618 / H37Rv</strain>
    </source>
</reference>
<reference key="2">
    <citation type="journal article" date="2022" name="Genomics">
        <title>Deep N-terminomics of Mycobacterium tuberculosis H37Rv extensively correct annotated encoding genes.</title>
        <authorList>
            <person name="Shi J."/>
            <person name="Meng S."/>
            <person name="Wan L."/>
            <person name="Zhang Z."/>
            <person name="Jiang S."/>
            <person name="Zhu H."/>
            <person name="Dai E."/>
            <person name="Chang L."/>
            <person name="Gao H."/>
            <person name="Wan K."/>
            <person name="Zhang L."/>
            <person name="Zhao X."/>
            <person name="Liu H."/>
            <person name="Lyu Z."/>
            <person name="Zhang Y."/>
            <person name="Xu P."/>
        </authorList>
    </citation>
    <scope>PROTEIN SEQUENCE OF 8-55</scope>
    <scope>SEQUENCE REVISION TO N-TERMINUS</scope>
    <source>
        <strain>H37Rv</strain>
    </source>
</reference>
<reference key="3">
    <citation type="journal article" date="2005" name="Mol. Microbiol.">
        <title>Mycobacterium tuberculosis appears to lack alpha-ketoglutarate dehydrogenase and encodes pyruvate dehydrogenase in widely separated genes.</title>
        <authorList>
            <person name="Tian J."/>
            <person name="Bryk R."/>
            <person name="Shi S."/>
            <person name="Erdjument-Bromage H."/>
            <person name="Tempst P."/>
            <person name="Nathan C."/>
        </authorList>
    </citation>
    <scope>FUNCTION</scope>
    <scope>CATALYTIC ACTIVITY</scope>
    <scope>COFACTOR</scope>
    <scope>BIOPHYSICOCHEMICAL PROPERTIES</scope>
    <scope>IDENTIFICATION IN THE PDH COMPLEX</scope>
    <source>
        <strain>ATCC 25618 / H37Rv</strain>
    </source>
</reference>
<reference key="4">
    <citation type="journal article" date="2010" name="PLoS ONE">
        <title>Prokaryotic ubiquitin-like protein (Pup) proteome of Mycobacterium tuberculosis.</title>
        <authorList>
            <person name="Festa R.A."/>
            <person name="McAllister F."/>
            <person name="Pearce M.J."/>
            <person name="Mintseris J."/>
            <person name="Burns K.E."/>
            <person name="Gygi S.P."/>
            <person name="Darwin K.H."/>
        </authorList>
    </citation>
    <scope>PUPYLATION AT LYS-375</scope>
    <scope>IDENTIFICATION BY MASS SPECTROMETRY</scope>
    <source>
        <strain>ATCC 25618 / H37Rv</strain>
    </source>
</reference>
<reference key="5">
    <citation type="journal article" date="2011" name="Mol. Cell. Proteomics">
        <title>Proteogenomic analysis of Mycobacterium tuberculosis by high resolution mass spectrometry.</title>
        <authorList>
            <person name="Kelkar D.S."/>
            <person name="Kumar D."/>
            <person name="Kumar P."/>
            <person name="Balakrishnan L."/>
            <person name="Muthusamy B."/>
            <person name="Yadav A.K."/>
            <person name="Shrivastava P."/>
            <person name="Marimuthu A."/>
            <person name="Anand S."/>
            <person name="Sundaram H."/>
            <person name="Kingsbury R."/>
            <person name="Harsha H.C."/>
            <person name="Nair B."/>
            <person name="Prasad T.S."/>
            <person name="Chauhan D.S."/>
            <person name="Katoch K."/>
            <person name="Katoch V.M."/>
            <person name="Kumar P."/>
            <person name="Chaerkady R."/>
            <person name="Ramachandran S."/>
            <person name="Dash D."/>
            <person name="Pandey A."/>
        </authorList>
    </citation>
    <scope>IDENTIFICATION BY MASS SPECTROMETRY [LARGE SCALE ANALYSIS]</scope>
    <source>
        <strain>ATCC 25618 / H37Rv</strain>
    </source>
</reference>
<keyword id="KW-0903">Direct protein sequencing</keyword>
<keyword id="KW-1017">Isopeptide bond</keyword>
<keyword id="KW-0460">Magnesium</keyword>
<keyword id="KW-0560">Oxidoreductase</keyword>
<keyword id="KW-0670">Pyruvate</keyword>
<keyword id="KW-1185">Reference proteome</keyword>
<keyword id="KW-0786">Thiamine pyrophosphate</keyword>
<keyword id="KW-0832">Ubl conjugation</keyword>
<name>ODP1_MYCTU</name>
<accession>P9WIS9</accession>
<accession>L0TBX6</accession>
<accession>Q10504</accession>
<feature type="chain" id="PRO_0000162246" description="Pyruvate dehydrogenase E1 component">
    <location>
        <begin position="1"/>
        <end position="930"/>
    </location>
</feature>
<feature type="region of interest" description="Disordered" evidence="2">
    <location>
        <begin position="1"/>
        <end position="21"/>
    </location>
</feature>
<feature type="compositionally biased region" description="Basic and acidic residues" evidence="2">
    <location>
        <begin position="1"/>
        <end position="10"/>
    </location>
</feature>
<feature type="cross-link" description="Isoglutamyl lysine isopeptide (Lys-Gln) (interchain with Q-Cter in protein Pup)" evidence="4">
    <location>
        <position position="375"/>
    </location>
</feature>
<protein>
    <recommendedName>
        <fullName evidence="7">Pyruvate dehydrogenase E1 component</fullName>
        <shortName evidence="6">PDH E1 component</shortName>
        <ecNumber evidence="3">1.2.4.1</ecNumber>
    </recommendedName>
</protein>
<gene>
    <name type="primary">aceE</name>
    <name type="ordered locus">Rv2241</name>
    <name type="ORF">MTCY427.22</name>
</gene>
<comment type="function">
    <text evidence="3">Component of the pyruvate dehydrogenase (PDH) complex, that catalyzes the overall conversion of pyruvate to acetyl-CoA and CO(2). AceE has reductase activity with pyruvate but does not react with 2-oxoglutarate.</text>
</comment>
<comment type="catalytic activity">
    <reaction evidence="3">
        <text>N(6)-[(R)-lipoyl]-L-lysyl-[protein] + pyruvate + H(+) = N(6)-[(R)-S(8)-acetyldihydrolipoyl]-L-lysyl-[protein] + CO2</text>
        <dbReference type="Rhea" id="RHEA:19189"/>
        <dbReference type="Rhea" id="RHEA-COMP:10474"/>
        <dbReference type="Rhea" id="RHEA-COMP:10478"/>
        <dbReference type="ChEBI" id="CHEBI:15361"/>
        <dbReference type="ChEBI" id="CHEBI:15378"/>
        <dbReference type="ChEBI" id="CHEBI:16526"/>
        <dbReference type="ChEBI" id="CHEBI:83099"/>
        <dbReference type="ChEBI" id="CHEBI:83111"/>
        <dbReference type="EC" id="1.2.4.1"/>
    </reaction>
</comment>
<comment type="cofactor">
    <cofactor evidence="3">
        <name>Mg(2+)</name>
        <dbReference type="ChEBI" id="CHEBI:18420"/>
    </cofactor>
</comment>
<comment type="cofactor">
    <cofactor evidence="3">
        <name>thiamine diphosphate</name>
        <dbReference type="ChEBI" id="CHEBI:58937"/>
    </cofactor>
</comment>
<comment type="biophysicochemical properties">
    <kinetics>
        <KM evidence="3">47 uM for pyruvate</KM>
    </kinetics>
    <phDependence>
        <text evidence="3">Optimum pH is 8.0 for PDH complex activity. Half-maximal activity is observed at pH 7.0 and pH 9.0. Activity is abolished at pH &lt; 5.</text>
    </phDependence>
</comment>
<comment type="subunit">
    <text evidence="1 3">Homodimer (By similarity). Part of the PDH complex, consisting of multiple copies of AceE (E1), DlaT (E2) and Lpd (E3).</text>
</comment>
<comment type="sequence caution" evidence="5">
    <conflict type="erroneous initiation">
        <sequence resource="EMBL-CDS" id="CCP45021"/>
    </conflict>
    <text>Truncated N-terminus.</text>
</comment>
<dbReference type="EC" id="1.2.4.1" evidence="3"/>
<dbReference type="EMBL" id="AL123456">
    <property type="protein sequence ID" value="CCP45021.1"/>
    <property type="status" value="ALT_INIT"/>
    <property type="molecule type" value="Genomic_DNA"/>
</dbReference>
<dbReference type="PIR" id="E70778">
    <property type="entry name" value="E70778"/>
</dbReference>
<dbReference type="RefSeq" id="NP_216757.3">
    <property type="nucleotide sequence ID" value="NC_000962.3"/>
</dbReference>
<dbReference type="RefSeq" id="WP_003900486.1">
    <property type="nucleotide sequence ID" value="NC_000962.3"/>
</dbReference>
<dbReference type="RefSeq" id="WP_003911788.1">
    <property type="nucleotide sequence ID" value="NZ_NVQJ01000008.1"/>
</dbReference>
<dbReference type="SMR" id="P9WIS9"/>
<dbReference type="FunCoup" id="P9WIS9">
    <property type="interactions" value="116"/>
</dbReference>
<dbReference type="STRING" id="83332.Rv2241"/>
<dbReference type="PaxDb" id="83332-Rv2241"/>
<dbReference type="DNASU" id="887246"/>
<dbReference type="GeneID" id="45426221"/>
<dbReference type="GeneID" id="887246"/>
<dbReference type="KEGG" id="mtu:Rv2241"/>
<dbReference type="PATRIC" id="fig|83332.12.peg.2499"/>
<dbReference type="TubercuList" id="Rv2241"/>
<dbReference type="eggNOG" id="COG2609">
    <property type="taxonomic scope" value="Bacteria"/>
</dbReference>
<dbReference type="InParanoid" id="P9WIS9"/>
<dbReference type="OrthoDB" id="9759664at2"/>
<dbReference type="SABIO-RK" id="P9WIS9"/>
<dbReference type="Proteomes" id="UP000001584">
    <property type="component" value="Chromosome"/>
</dbReference>
<dbReference type="GO" id="GO:0005576">
    <property type="term" value="C:extracellular region"/>
    <property type="evidence" value="ECO:0007005"/>
    <property type="project" value="MTBBASE"/>
</dbReference>
<dbReference type="GO" id="GO:0009274">
    <property type="term" value="C:peptidoglycan-based cell wall"/>
    <property type="evidence" value="ECO:0007005"/>
    <property type="project" value="MTBBASE"/>
</dbReference>
<dbReference type="GO" id="GO:0005886">
    <property type="term" value="C:plasma membrane"/>
    <property type="evidence" value="ECO:0007005"/>
    <property type="project" value="MTBBASE"/>
</dbReference>
<dbReference type="GO" id="GO:0045254">
    <property type="term" value="C:pyruvate dehydrogenase complex"/>
    <property type="evidence" value="ECO:0000314"/>
    <property type="project" value="MTBBASE"/>
</dbReference>
<dbReference type="GO" id="GO:0000287">
    <property type="term" value="F:magnesium ion binding"/>
    <property type="evidence" value="ECO:0000314"/>
    <property type="project" value="MTBBASE"/>
</dbReference>
<dbReference type="GO" id="GO:0004739">
    <property type="term" value="F:pyruvate dehydrogenase (acetyl-transferring) activity"/>
    <property type="evidence" value="ECO:0000314"/>
    <property type="project" value="MTBBASE"/>
</dbReference>
<dbReference type="CDD" id="cd02017">
    <property type="entry name" value="TPP_E1_EcPDC_like"/>
    <property type="match status" value="1"/>
</dbReference>
<dbReference type="FunFam" id="3.40.50.920:FF:000018">
    <property type="entry name" value="Pyruvate dehydrogenase E1 component"/>
    <property type="match status" value="1"/>
</dbReference>
<dbReference type="FunFam" id="3.40.50.970:FF:000009">
    <property type="entry name" value="Pyruvate dehydrogenase E1 component"/>
    <property type="match status" value="1"/>
</dbReference>
<dbReference type="FunFam" id="3.40.50.970:FF:000011">
    <property type="entry name" value="Pyruvate dehydrogenase E1 component"/>
    <property type="match status" value="1"/>
</dbReference>
<dbReference type="Gene3D" id="3.40.50.920">
    <property type="match status" value="1"/>
</dbReference>
<dbReference type="Gene3D" id="3.40.50.970">
    <property type="match status" value="2"/>
</dbReference>
<dbReference type="InterPro" id="IPR035807">
    <property type="entry name" value="PDC_E1_N"/>
</dbReference>
<dbReference type="InterPro" id="IPR051157">
    <property type="entry name" value="PDH/Transketolase"/>
</dbReference>
<dbReference type="InterPro" id="IPR004660">
    <property type="entry name" value="PDH_E1"/>
</dbReference>
<dbReference type="InterPro" id="IPR041621">
    <property type="entry name" value="PDH_E1_M"/>
</dbReference>
<dbReference type="InterPro" id="IPR029061">
    <property type="entry name" value="THDP-binding"/>
</dbReference>
<dbReference type="InterPro" id="IPR009014">
    <property type="entry name" value="Transketo_C/PFOR_II"/>
</dbReference>
<dbReference type="InterPro" id="IPR055152">
    <property type="entry name" value="Transketolase-like_C_2"/>
</dbReference>
<dbReference type="InterPro" id="IPR005474">
    <property type="entry name" value="Transketolase_N"/>
</dbReference>
<dbReference type="NCBIfam" id="TIGR00759">
    <property type="entry name" value="aceE"/>
    <property type="match status" value="1"/>
</dbReference>
<dbReference type="PANTHER" id="PTHR43825">
    <property type="entry name" value="PYRUVATE DEHYDROGENASE E1 COMPONENT"/>
    <property type="match status" value="1"/>
</dbReference>
<dbReference type="PANTHER" id="PTHR43825:SF3">
    <property type="entry name" value="PYRUVATE DEHYDROGENASE E1 COMPONENT"/>
    <property type="match status" value="1"/>
</dbReference>
<dbReference type="Pfam" id="PF17831">
    <property type="entry name" value="PDH_E1_M"/>
    <property type="match status" value="1"/>
</dbReference>
<dbReference type="Pfam" id="PF22613">
    <property type="entry name" value="Transketolase_C_1"/>
    <property type="match status" value="1"/>
</dbReference>
<dbReference type="Pfam" id="PF00456">
    <property type="entry name" value="Transketolase_N"/>
    <property type="match status" value="1"/>
</dbReference>
<dbReference type="PIRSF" id="PIRSF000156">
    <property type="entry name" value="Pyruvate_dh_E1"/>
    <property type="match status" value="1"/>
</dbReference>
<dbReference type="SUPFAM" id="SSF52518">
    <property type="entry name" value="Thiamin diphosphate-binding fold (THDP-binding)"/>
    <property type="match status" value="2"/>
</dbReference>
<dbReference type="SUPFAM" id="SSF52922">
    <property type="entry name" value="TK C-terminal domain-like"/>
    <property type="match status" value="1"/>
</dbReference>
<proteinExistence type="evidence at protein level"/>
<evidence type="ECO:0000250" key="1"/>
<evidence type="ECO:0000256" key="2">
    <source>
        <dbReference type="SAM" id="MobiDB-lite"/>
    </source>
</evidence>
<evidence type="ECO:0000269" key="3">
    <source>
    </source>
</evidence>
<evidence type="ECO:0000269" key="4">
    <source>
    </source>
</evidence>
<evidence type="ECO:0000269" key="5">
    <source>
    </source>
</evidence>
<evidence type="ECO:0000305" key="6"/>
<evidence type="ECO:0000305" key="7">
    <source>
    </source>
</evidence>
<sequence>MTTDFARHDLAQNSNSASEPDRVRVIREGVASYLPDIDPEETSEWLESFDTLLQRCGPSRARYLMLRLLERAGEQRVAIPALTSTDYVNTIPTELEPWFPGDEDVERRYRAWIRWNAAIMVHRAQRPGVGVGGHISTYASSAALYEVGFNHFFRGKSHPGGGDQVFIQGHASPGIYARAFLEGRLTAEQLDGFRQEHSHVGGGLPSYPHPRLMPDFWEFPTVSMGLGPLNAIYQARFNHYLHDRGIKDTSDQHVWCFLGDGEMDEPESRGLAHVGALEGLDNLTFVINCNLQRLDGPVRGNGKIIQELESFFRGAGWNVIKVVWGREWDALLHADRDGALVNLMNTTPDGDYQTYKANDGGYVRDHFFGRDPRTKALVENMSDQDIWNLKRGGHDYRKVYAAYRAAVDHKGQPTVILAKTIKGYALGKHFEGRNATHQMKKLTLEDLKEFRDTQRIPVSDAQLEENPYLPPYYHPGLNAPEIRYMLDRRRALGGFVPERRTKSKALTLPGRDIYAPLKKGSGHQEVATTMATVRTFKEVLRDKQIGPRIVPIIPDEARTFGMDSWFPSLKIYNRNGQLYTAVDADLMLAYKESEVGQILHEGINEAGSVGSFIAAGTSYATHNEPMIPIYIFYSMFGFQRTGDSFWAAADQMARGFVLGATAGRTTLTGEGLQHADGHSLLLAATNPAVVAYDPAFAYEIAYIVESGLARMCGENPENIFFYITVYNEPYVQPPEPENFDPEGVLRGIYRYHAATEQRTNKAQILASGVAMPAALRAAQMLAAEWDVAADVWSVTSWGELNRDGVAIETEKLRHPDRPAGVPYVTRALENARGPVIAVSDWMRAVPEQIRPWVPGTYLTLGTDGFGFSDTRPAARRYFNTDAESQVVAVLEALAGDGEIDPSVPVAAARQYRIDDVAAAPEQTTDPGPGA</sequence>